<evidence type="ECO:0000250" key="1"/>
<evidence type="ECO:0000250" key="2">
    <source>
        <dbReference type="UniProtKB" id="O35828"/>
    </source>
</evidence>
<evidence type="ECO:0000250" key="3">
    <source>
        <dbReference type="UniProtKB" id="P57737"/>
    </source>
</evidence>
<evidence type="ECO:0000250" key="4">
    <source>
        <dbReference type="UniProtKB" id="Q9D2V7"/>
    </source>
</evidence>
<evidence type="ECO:0000256" key="5">
    <source>
        <dbReference type="SAM" id="MobiDB-lite"/>
    </source>
</evidence>
<evidence type="ECO:0000305" key="6"/>
<organism>
    <name type="scientific">Bos taurus</name>
    <name type="common">Bovine</name>
    <dbReference type="NCBI Taxonomy" id="9913"/>
    <lineage>
        <taxon>Eukaryota</taxon>
        <taxon>Metazoa</taxon>
        <taxon>Chordata</taxon>
        <taxon>Craniata</taxon>
        <taxon>Vertebrata</taxon>
        <taxon>Euteleostomi</taxon>
        <taxon>Mammalia</taxon>
        <taxon>Eutheria</taxon>
        <taxon>Laurasiatheria</taxon>
        <taxon>Artiodactyla</taxon>
        <taxon>Ruminantia</taxon>
        <taxon>Pecora</taxon>
        <taxon>Bovidae</taxon>
        <taxon>Bovinae</taxon>
        <taxon>Bos</taxon>
    </lineage>
</organism>
<keyword id="KW-0009">Actin-binding</keyword>
<keyword id="KW-0963">Cytoplasm</keyword>
<keyword id="KW-0968">Cytoplasmic vesicle</keyword>
<keyword id="KW-0333">Golgi apparatus</keyword>
<keyword id="KW-1017">Isopeptide bond</keyword>
<keyword id="KW-0472">Membrane</keyword>
<keyword id="KW-0597">Phosphoprotein</keyword>
<keyword id="KW-0653">Protein transport</keyword>
<keyword id="KW-1185">Reference proteome</keyword>
<keyword id="KW-0677">Repeat</keyword>
<keyword id="KW-0813">Transport</keyword>
<keyword id="KW-0832">Ubl conjugation</keyword>
<keyword id="KW-0853">WD repeat</keyword>
<accession>Q0V8F1</accession>
<dbReference type="EMBL" id="BT026268">
    <property type="protein sequence ID" value="ABG67107.1"/>
    <property type="molecule type" value="mRNA"/>
</dbReference>
<dbReference type="RefSeq" id="NP_001069371.1">
    <property type="nucleotide sequence ID" value="NM_001075903.1"/>
</dbReference>
<dbReference type="SMR" id="Q0V8F1"/>
<dbReference type="FunCoup" id="Q0V8F1">
    <property type="interactions" value="1281"/>
</dbReference>
<dbReference type="STRING" id="9913.ENSBTAP00000012121"/>
<dbReference type="PaxDb" id="9913-ENSBTAP00000012121"/>
<dbReference type="PeptideAtlas" id="Q0V8F1"/>
<dbReference type="GeneID" id="527934"/>
<dbReference type="KEGG" id="bta:527934"/>
<dbReference type="CTD" id="79585"/>
<dbReference type="eggNOG" id="KOG1445">
    <property type="taxonomic scope" value="Eukaryota"/>
</dbReference>
<dbReference type="InParanoid" id="Q0V8F1"/>
<dbReference type="OrthoDB" id="1850764at2759"/>
<dbReference type="Proteomes" id="UP000009136">
    <property type="component" value="Unplaced"/>
</dbReference>
<dbReference type="GO" id="GO:0031410">
    <property type="term" value="C:cytoplasmic vesicle"/>
    <property type="evidence" value="ECO:0007669"/>
    <property type="project" value="UniProtKB-KW"/>
</dbReference>
<dbReference type="GO" id="GO:0005829">
    <property type="term" value="C:cytosol"/>
    <property type="evidence" value="ECO:0007669"/>
    <property type="project" value="UniProtKB-SubCell"/>
</dbReference>
<dbReference type="GO" id="GO:0000139">
    <property type="term" value="C:Golgi membrane"/>
    <property type="evidence" value="ECO:0007669"/>
    <property type="project" value="UniProtKB-SubCell"/>
</dbReference>
<dbReference type="GO" id="GO:0005802">
    <property type="term" value="C:trans-Golgi network"/>
    <property type="evidence" value="ECO:0000250"/>
    <property type="project" value="UniProtKB"/>
</dbReference>
<dbReference type="GO" id="GO:0003779">
    <property type="term" value="F:actin binding"/>
    <property type="evidence" value="ECO:0000250"/>
    <property type="project" value="UniProtKB"/>
</dbReference>
<dbReference type="GO" id="GO:0030041">
    <property type="term" value="P:actin filament polymerization"/>
    <property type="evidence" value="ECO:0000250"/>
    <property type="project" value="UniProtKB"/>
</dbReference>
<dbReference type="GO" id="GO:0006895">
    <property type="term" value="P:Golgi to endosome transport"/>
    <property type="evidence" value="ECO:0000250"/>
    <property type="project" value="UniProtKB"/>
</dbReference>
<dbReference type="GO" id="GO:0015031">
    <property type="term" value="P:protein transport"/>
    <property type="evidence" value="ECO:0007669"/>
    <property type="project" value="UniProtKB-KW"/>
</dbReference>
<dbReference type="FunFam" id="2.130.10.10:FF:000076">
    <property type="entry name" value="Coronin"/>
    <property type="match status" value="1"/>
</dbReference>
<dbReference type="FunFam" id="2.130.10.10:FF:000310">
    <property type="entry name" value="Coronin"/>
    <property type="match status" value="1"/>
</dbReference>
<dbReference type="Gene3D" id="2.130.10.10">
    <property type="entry name" value="YVTN repeat-like/Quinoprotein amine dehydrogenase"/>
    <property type="match status" value="2"/>
</dbReference>
<dbReference type="InterPro" id="IPR015505">
    <property type="entry name" value="Coronin"/>
</dbReference>
<dbReference type="InterPro" id="IPR015048">
    <property type="entry name" value="DUF1899"/>
</dbReference>
<dbReference type="InterPro" id="IPR011047">
    <property type="entry name" value="Quinoprotein_ADH-like_sf"/>
</dbReference>
<dbReference type="InterPro" id="IPR015943">
    <property type="entry name" value="WD40/YVTN_repeat-like_dom_sf"/>
</dbReference>
<dbReference type="InterPro" id="IPR019775">
    <property type="entry name" value="WD40_repeat_CS"/>
</dbReference>
<dbReference type="InterPro" id="IPR001680">
    <property type="entry name" value="WD40_rpt"/>
</dbReference>
<dbReference type="PANTHER" id="PTHR10856">
    <property type="entry name" value="CORONIN"/>
    <property type="match status" value="1"/>
</dbReference>
<dbReference type="PANTHER" id="PTHR10856:SF20">
    <property type="entry name" value="CORONIN-7"/>
    <property type="match status" value="1"/>
</dbReference>
<dbReference type="Pfam" id="PF08953">
    <property type="entry name" value="DUF1899"/>
    <property type="match status" value="2"/>
</dbReference>
<dbReference type="Pfam" id="PF00400">
    <property type="entry name" value="WD40"/>
    <property type="match status" value="5"/>
</dbReference>
<dbReference type="Pfam" id="PF16300">
    <property type="entry name" value="WD40_4"/>
    <property type="match status" value="2"/>
</dbReference>
<dbReference type="SMART" id="SM01166">
    <property type="entry name" value="DUF1899"/>
    <property type="match status" value="2"/>
</dbReference>
<dbReference type="SMART" id="SM01167">
    <property type="entry name" value="DUF1900"/>
    <property type="match status" value="2"/>
</dbReference>
<dbReference type="SMART" id="SM00320">
    <property type="entry name" value="WD40"/>
    <property type="match status" value="7"/>
</dbReference>
<dbReference type="SUPFAM" id="SSF50998">
    <property type="entry name" value="Quinoprotein alcohol dehydrogenase-like"/>
    <property type="match status" value="1"/>
</dbReference>
<dbReference type="PROSITE" id="PS00678">
    <property type="entry name" value="WD_REPEATS_1"/>
    <property type="match status" value="1"/>
</dbReference>
<dbReference type="PROSITE" id="PS50082">
    <property type="entry name" value="WD_REPEATS_2"/>
    <property type="match status" value="3"/>
</dbReference>
<dbReference type="PROSITE" id="PS50294">
    <property type="entry name" value="WD_REPEATS_REGION"/>
    <property type="match status" value="2"/>
</dbReference>
<feature type="chain" id="PRO_0000291588" description="Coronin-7">
    <location>
        <begin position="1"/>
        <end position="915"/>
    </location>
</feature>
<feature type="repeat" description="WD 1">
    <location>
        <begin position="75"/>
        <end position="115"/>
    </location>
</feature>
<feature type="repeat" description="WD 2">
    <location>
        <begin position="124"/>
        <end position="163"/>
    </location>
</feature>
<feature type="repeat" description="WD 3">
    <location>
        <begin position="166"/>
        <end position="205"/>
    </location>
</feature>
<feature type="repeat" description="WD 4">
    <location>
        <begin position="209"/>
        <end position="253"/>
    </location>
</feature>
<feature type="repeat" description="WD 5">
    <location>
        <begin position="533"/>
        <end position="573"/>
    </location>
</feature>
<feature type="repeat" description="WD 6">
    <location>
        <begin position="583"/>
        <end position="623"/>
    </location>
</feature>
<feature type="repeat" description="WD 7">
    <location>
        <begin position="626"/>
        <end position="665"/>
    </location>
</feature>
<feature type="repeat" description="WD 8">
    <location>
        <begin position="719"/>
        <end position="759"/>
    </location>
</feature>
<feature type="region of interest" description="Disordered" evidence="5">
    <location>
        <begin position="396"/>
        <end position="456"/>
    </location>
</feature>
<feature type="region of interest" description="Disordered" evidence="5">
    <location>
        <begin position="850"/>
        <end position="915"/>
    </location>
</feature>
<feature type="compositionally biased region" description="Low complexity" evidence="5">
    <location>
        <begin position="399"/>
        <end position="413"/>
    </location>
</feature>
<feature type="compositionally biased region" description="Low complexity" evidence="5">
    <location>
        <begin position="420"/>
        <end position="450"/>
    </location>
</feature>
<feature type="compositionally biased region" description="Low complexity" evidence="5">
    <location>
        <begin position="859"/>
        <end position="869"/>
    </location>
</feature>
<feature type="compositionally biased region" description="Basic and acidic residues" evidence="5">
    <location>
        <begin position="874"/>
        <end position="886"/>
    </location>
</feature>
<feature type="modified residue" description="Phosphoserine" evidence="4">
    <location>
        <position position="453"/>
    </location>
</feature>
<feature type="modified residue" description="Phosphoserine" evidence="2">
    <location>
        <position position="456"/>
    </location>
</feature>
<feature type="modified residue" description="Phosphoserine" evidence="4">
    <location>
        <position position="905"/>
    </location>
</feature>
<feature type="cross-link" description="Glycyl lysine isopeptide (Lys-Gly) (interchain with G-Cter in ubiquitin)" evidence="3">
    <location>
        <position position="463"/>
    </location>
</feature>
<comment type="function">
    <text evidence="1">F-actin regulator involved in anterograde Golgi to endosome transport: upon ubiquitination via 'Lys-33'-linked ubiquitin chains by the BCR(KLHL20) E3 ubiquitin ligase complex, interacts with EPS15 and localizes to the trans-Golgi network, where it promotes actin polymerization, thereby facilitating post-Golgi trafficking. May play a role in the maintenance of the Golgi apparatus morphology (By similarity).</text>
</comment>
<comment type="subunit">
    <text evidence="1">Interacts with clathrin adapter AP1 complex. This interaction takes place at Golgi membranes and not AP1-positive endosomal membranes. Interacts (when ubiquitinated at Lys-463) with EPS15 (By similarity).</text>
</comment>
<comment type="subcellular location">
    <subcellularLocation>
        <location evidence="1">Golgi apparatus membrane</location>
    </subcellularLocation>
    <subcellularLocation>
        <location evidence="1">Golgi apparatus</location>
        <location evidence="1">trans-Golgi network</location>
    </subcellularLocation>
    <subcellularLocation>
        <location evidence="1">Cytoplasmic vesicle</location>
    </subcellularLocation>
    <subcellularLocation>
        <location evidence="1">Cytoplasm</location>
        <location evidence="1">Cytosol</location>
    </subcellularLocation>
    <text evidence="1">Predominantly cytosolic. Detected on vesicle-like cytoplasmic structures and on the cis-Golgi. Not associated with actin filaments (By similarity).</text>
</comment>
<comment type="PTM">
    <text evidence="1">The membrane-associated form is phosphorylated on tyrosine residues.</text>
</comment>
<comment type="PTM">
    <text evidence="1">Ubiquitinated via 'Lys-33'-linked ubiquitin chains by the BCR(KLHL20) E3 ubiquitin ligase complex: 'Lys-33'-linked ubiquitination promotes interaction with EPS15 and facilitates actin polymerization at the trans-Golgi network, thereby facilitating post-Golgi trafficking. Deubiquitinated by ZRANB1/TRABID (By similarity).</text>
</comment>
<comment type="similarity">
    <text evidence="6">Belongs to the WD repeat coronin family.</text>
</comment>
<name>CORO7_BOVIN</name>
<gene>
    <name type="primary">CORO7</name>
</gene>
<protein>
    <recommendedName>
        <fullName>Coronin-7</fullName>
        <shortName>Crn7</shortName>
    </recommendedName>
</protein>
<sequence length="915" mass="99252">MNRFKVSKFRHTEARQPRREAWIGDIRAGTAPSCGNHIKASCSLIAFNSDHPGVLGIVPLESQGEDKRQVTHLGCHSDLVTDLDFSPFDDFLLATASADRTVKLWRLPLSGQALPSGPGLLLGPEDAQVEVLQFHPTADGVLLSAAGRAVKVWDATKQQPLTELATHGDLVQGAAWSRDGALLGTTCKDKQLRIFDPRAKPEAAQSTPAHENSRDGRLVWTGTQEYLVSTGFNQMREREVKLWDTRLFSAALTSLTLDTSPRSLVPLLDPDSGLLVLAGKGENQLYCYEAAPQQPALSPVTQCLLESVLRGAALVPRRALAVMGCEVLRVLQLSDTAIVPISYHVPRKTVEFHEDLFPDTAGCVPASDPHAWWAGSDQQVQRVSLHPARRAHPSFTSCLAPPAELTPATAQPAGTPEGFSSTPSSLTSPSTPSSLGPSLTSTSGIGTSPSQRSLQSLLGPSSKFRHAQGSVLHRDSHITNLKGLNLTTPGESDGFCANQLRVAVPLLSSGGQVAVLELRKPGRLPDTALPTLQNGVAVTDLAWDPFDPHRLAVAGEDARIRLWRVPPDGLQEVLTMPEAVLTGHTEKIYSLRFHPLAADVLASSSYDLTVRIWDLKVGAEQLRLQGHRDQIFGLAWSPDGQQLATVCKDGRLRIYEPRGSPEPLQEGPGPEGARGARVVWVCDGHYLLVSGFDSRSERQLLLYSAKALAGGPSAVLGLDVAPSTLLPSYDPDTGLVLLTGKGDTRVFLYELLPGAPFFLECNSFTSPDPHKGFILLPKTECDVREVEFARCLRLRQTSLEPVAFRLPRVRKEFFQDDVFPDTTVSWEPALSAEAWLGGANGTPRLLSLQPPGMTPVSQAPREAPARRAPSSVYLEEKSDQQKKEELLSAMVAKLGNREDPLPQDSFEGVDEDEWD</sequence>
<reference key="1">
    <citation type="journal article" date="2005" name="BMC Genomics">
        <title>Characterization of 954 bovine full-CDS cDNA sequences.</title>
        <authorList>
            <person name="Harhay G.P."/>
            <person name="Sonstegard T.S."/>
            <person name="Keele J.W."/>
            <person name="Heaton M.P."/>
            <person name="Clawson M.L."/>
            <person name="Snelling W.M."/>
            <person name="Wiedmann R.T."/>
            <person name="Van Tassell C.P."/>
            <person name="Smith T.P.L."/>
        </authorList>
    </citation>
    <scope>NUCLEOTIDE SEQUENCE [LARGE SCALE MRNA]</scope>
</reference>
<proteinExistence type="evidence at transcript level"/>